<protein>
    <recommendedName>
        <fullName evidence="1">Xanthine-guanine phosphoribosyltransferase</fullName>
        <shortName evidence="1">XGPRT</shortName>
        <ecNumber evidence="1">2.4.2.-</ecNumber>
        <ecNumber evidence="1">2.4.2.22</ecNumber>
    </recommendedName>
    <alternativeName>
        <fullName evidence="1">Xanthine phosphoribosyltransferase</fullName>
    </alternativeName>
</protein>
<comment type="function">
    <text evidence="1">Purine salvage pathway enzyme that catalyzes the transfer of the ribosyl-5-phosphate group from 5-phospho-alpha-D-ribose 1-diphosphate (PRPP) to the N9 position of the 6-oxopurines guanine and xanthine to form the corresponding ribonucleotides GMP (guanosine 5'-monophosphate) and XMP (xanthosine 5'-monophosphate), with the release of PPi. To a lesser extent, also acts on hypoxanthine.</text>
</comment>
<comment type="catalytic activity">
    <reaction evidence="1">
        <text>GMP + diphosphate = guanine + 5-phospho-alpha-D-ribose 1-diphosphate</text>
        <dbReference type="Rhea" id="RHEA:25424"/>
        <dbReference type="ChEBI" id="CHEBI:16235"/>
        <dbReference type="ChEBI" id="CHEBI:33019"/>
        <dbReference type="ChEBI" id="CHEBI:58017"/>
        <dbReference type="ChEBI" id="CHEBI:58115"/>
    </reaction>
    <physiologicalReaction direction="right-to-left" evidence="1">
        <dbReference type="Rhea" id="RHEA:25426"/>
    </physiologicalReaction>
</comment>
<comment type="catalytic activity">
    <reaction evidence="1">
        <text>XMP + diphosphate = xanthine + 5-phospho-alpha-D-ribose 1-diphosphate</text>
        <dbReference type="Rhea" id="RHEA:10800"/>
        <dbReference type="ChEBI" id="CHEBI:17712"/>
        <dbReference type="ChEBI" id="CHEBI:33019"/>
        <dbReference type="ChEBI" id="CHEBI:57464"/>
        <dbReference type="ChEBI" id="CHEBI:58017"/>
        <dbReference type="EC" id="2.4.2.22"/>
    </reaction>
    <physiologicalReaction direction="right-to-left" evidence="1">
        <dbReference type="Rhea" id="RHEA:10802"/>
    </physiologicalReaction>
</comment>
<comment type="catalytic activity">
    <reaction evidence="1">
        <text>IMP + diphosphate = hypoxanthine + 5-phospho-alpha-D-ribose 1-diphosphate</text>
        <dbReference type="Rhea" id="RHEA:17973"/>
        <dbReference type="ChEBI" id="CHEBI:17368"/>
        <dbReference type="ChEBI" id="CHEBI:33019"/>
        <dbReference type="ChEBI" id="CHEBI:58017"/>
        <dbReference type="ChEBI" id="CHEBI:58053"/>
    </reaction>
    <physiologicalReaction direction="right-to-left" evidence="1">
        <dbReference type="Rhea" id="RHEA:17975"/>
    </physiologicalReaction>
</comment>
<comment type="cofactor">
    <cofactor evidence="1">
        <name>Mg(2+)</name>
        <dbReference type="ChEBI" id="CHEBI:18420"/>
    </cofactor>
</comment>
<comment type="pathway">
    <text evidence="1">Purine metabolism; GMP biosynthesis via salvage pathway; GMP from guanine: step 1/1.</text>
</comment>
<comment type="pathway">
    <text evidence="1">Purine metabolism; XMP biosynthesis via salvage pathway; XMP from xanthine: step 1/1.</text>
</comment>
<comment type="subunit">
    <text evidence="1">Homotetramer.</text>
</comment>
<comment type="subcellular location">
    <subcellularLocation>
        <location evidence="1">Cell inner membrane</location>
        <topology evidence="1">Peripheral membrane protein</topology>
    </subcellularLocation>
</comment>
<comment type="similarity">
    <text evidence="1">Belongs to the purine/pyrimidine phosphoribosyltransferase family. XGPT subfamily.</text>
</comment>
<reference key="1">
    <citation type="journal article" date="2008" name="BMC Genomics">
        <title>The genome of Aeromonas salmonicida subsp. salmonicida A449: insights into the evolution of a fish pathogen.</title>
        <authorList>
            <person name="Reith M.E."/>
            <person name="Singh R.K."/>
            <person name="Curtis B."/>
            <person name="Boyd J.M."/>
            <person name="Bouevitch A."/>
            <person name="Kimball J."/>
            <person name="Munholland J."/>
            <person name="Murphy C."/>
            <person name="Sarty D."/>
            <person name="Williams J."/>
            <person name="Nash J.H."/>
            <person name="Johnson S.C."/>
            <person name="Brown L.L."/>
        </authorList>
    </citation>
    <scope>NUCLEOTIDE SEQUENCE [LARGE SCALE GENOMIC DNA]</scope>
    <source>
        <strain>A449</strain>
    </source>
</reference>
<proteinExistence type="inferred from homology"/>
<keyword id="KW-0997">Cell inner membrane</keyword>
<keyword id="KW-1003">Cell membrane</keyword>
<keyword id="KW-0328">Glycosyltransferase</keyword>
<keyword id="KW-0460">Magnesium</keyword>
<keyword id="KW-0472">Membrane</keyword>
<keyword id="KW-0479">Metal-binding</keyword>
<keyword id="KW-0660">Purine salvage</keyword>
<keyword id="KW-0808">Transferase</keyword>
<sequence>MPKKFYVSWDNLQREARRLARRQLPVSQWKGIIAVSRGGLVPAALMARELGIRNVETLCISSYDHNNQRDLVVVKAATTAGDGEGWLVVDDLVDTGGTAKAIRDLYPKAKFITIFAKPMGEPLVDDFEVAIPQDTWIEQPWDMALEFAHPICDEE</sequence>
<gene>
    <name evidence="1" type="primary">gpt</name>
    <name type="ordered locus">ASA_0890</name>
</gene>
<feature type="chain" id="PRO_1000070602" description="Xanthine-guanine phosphoribosyltransferase">
    <location>
        <begin position="1"/>
        <end position="155"/>
    </location>
</feature>
<feature type="binding site" evidence="1">
    <location>
        <begin position="37"/>
        <end position="38"/>
    </location>
    <ligand>
        <name>5-phospho-alpha-D-ribose 1-diphosphate</name>
        <dbReference type="ChEBI" id="CHEBI:58017"/>
    </ligand>
</feature>
<feature type="binding site" evidence="1">
    <location>
        <position position="69"/>
    </location>
    <ligand>
        <name>5-phospho-alpha-D-ribose 1-diphosphate</name>
        <dbReference type="ChEBI" id="CHEBI:58017"/>
    </ligand>
</feature>
<feature type="binding site" evidence="1">
    <location>
        <position position="69"/>
    </location>
    <ligand>
        <name>GMP</name>
        <dbReference type="ChEBI" id="CHEBI:58115"/>
    </ligand>
</feature>
<feature type="binding site" evidence="1">
    <location>
        <begin position="90"/>
        <end position="98"/>
    </location>
    <ligand>
        <name>5-phospho-alpha-D-ribose 1-diphosphate</name>
        <dbReference type="ChEBI" id="CHEBI:58017"/>
    </ligand>
</feature>
<feature type="binding site" evidence="1">
    <location>
        <position position="91"/>
    </location>
    <ligand>
        <name>Mg(2+)</name>
        <dbReference type="ChEBI" id="CHEBI:18420"/>
    </ligand>
</feature>
<feature type="binding site" evidence="1">
    <location>
        <begin position="94"/>
        <end position="98"/>
    </location>
    <ligand>
        <name>GMP</name>
        <dbReference type="ChEBI" id="CHEBI:58115"/>
    </ligand>
</feature>
<feature type="binding site" evidence="1">
    <location>
        <position position="94"/>
    </location>
    <ligand>
        <name>guanine</name>
        <dbReference type="ChEBI" id="CHEBI:16235"/>
    </ligand>
</feature>
<feature type="binding site" evidence="1">
    <location>
        <position position="94"/>
    </location>
    <ligand>
        <name>xanthine</name>
        <dbReference type="ChEBI" id="CHEBI:17712"/>
    </ligand>
</feature>
<feature type="binding site" evidence="1">
    <location>
        <begin position="136"/>
        <end position="137"/>
    </location>
    <ligand>
        <name>GMP</name>
        <dbReference type="ChEBI" id="CHEBI:58115"/>
    </ligand>
</feature>
<feature type="binding site" evidence="1">
    <location>
        <position position="137"/>
    </location>
    <ligand>
        <name>guanine</name>
        <dbReference type="ChEBI" id="CHEBI:16235"/>
    </ligand>
</feature>
<feature type="binding site" evidence="1">
    <location>
        <position position="137"/>
    </location>
    <ligand>
        <name>xanthine</name>
        <dbReference type="ChEBI" id="CHEBI:17712"/>
    </ligand>
</feature>
<name>XGPT_AERS4</name>
<dbReference type="EC" id="2.4.2.-" evidence="1"/>
<dbReference type="EC" id="2.4.2.22" evidence="1"/>
<dbReference type="EMBL" id="CP000644">
    <property type="protein sequence ID" value="ABO89024.1"/>
    <property type="molecule type" value="Genomic_DNA"/>
</dbReference>
<dbReference type="RefSeq" id="WP_005317860.1">
    <property type="nucleotide sequence ID" value="NC_009348.1"/>
</dbReference>
<dbReference type="SMR" id="A4SJF2"/>
<dbReference type="STRING" id="29491.GCA_000820065_02366"/>
<dbReference type="GeneID" id="79878551"/>
<dbReference type="KEGG" id="asa:ASA_0890"/>
<dbReference type="eggNOG" id="COG2236">
    <property type="taxonomic scope" value="Bacteria"/>
</dbReference>
<dbReference type="HOGENOM" id="CLU_080904_3_0_6"/>
<dbReference type="UniPathway" id="UPA00602">
    <property type="reaction ID" value="UER00658"/>
</dbReference>
<dbReference type="UniPathway" id="UPA00909">
    <property type="reaction ID" value="UER00887"/>
</dbReference>
<dbReference type="Proteomes" id="UP000000225">
    <property type="component" value="Chromosome"/>
</dbReference>
<dbReference type="GO" id="GO:0005829">
    <property type="term" value="C:cytosol"/>
    <property type="evidence" value="ECO:0007669"/>
    <property type="project" value="TreeGrafter"/>
</dbReference>
<dbReference type="GO" id="GO:0005886">
    <property type="term" value="C:plasma membrane"/>
    <property type="evidence" value="ECO:0007669"/>
    <property type="project" value="UniProtKB-SubCell"/>
</dbReference>
<dbReference type="GO" id="GO:0052657">
    <property type="term" value="F:guanine phosphoribosyltransferase activity"/>
    <property type="evidence" value="ECO:0007669"/>
    <property type="project" value="RHEA"/>
</dbReference>
<dbReference type="GO" id="GO:0004422">
    <property type="term" value="F:hypoxanthine phosphoribosyltransferase activity"/>
    <property type="evidence" value="ECO:0007669"/>
    <property type="project" value="TreeGrafter"/>
</dbReference>
<dbReference type="GO" id="GO:0000287">
    <property type="term" value="F:magnesium ion binding"/>
    <property type="evidence" value="ECO:0007669"/>
    <property type="project" value="UniProtKB-UniRule"/>
</dbReference>
<dbReference type="GO" id="GO:0000310">
    <property type="term" value="F:xanthine phosphoribosyltransferase activity"/>
    <property type="evidence" value="ECO:0007669"/>
    <property type="project" value="UniProtKB-UniRule"/>
</dbReference>
<dbReference type="GO" id="GO:0032263">
    <property type="term" value="P:GMP salvage"/>
    <property type="evidence" value="ECO:0007669"/>
    <property type="project" value="UniProtKB-UniRule"/>
</dbReference>
<dbReference type="GO" id="GO:0032264">
    <property type="term" value="P:IMP salvage"/>
    <property type="evidence" value="ECO:0007669"/>
    <property type="project" value="TreeGrafter"/>
</dbReference>
<dbReference type="GO" id="GO:0006166">
    <property type="term" value="P:purine ribonucleoside salvage"/>
    <property type="evidence" value="ECO:0007669"/>
    <property type="project" value="UniProtKB-KW"/>
</dbReference>
<dbReference type="GO" id="GO:0032265">
    <property type="term" value="P:XMP salvage"/>
    <property type="evidence" value="ECO:0007669"/>
    <property type="project" value="UniProtKB-UniRule"/>
</dbReference>
<dbReference type="CDD" id="cd06223">
    <property type="entry name" value="PRTases_typeI"/>
    <property type="match status" value="1"/>
</dbReference>
<dbReference type="Gene3D" id="3.40.50.2020">
    <property type="match status" value="1"/>
</dbReference>
<dbReference type="HAMAP" id="MF_01903">
    <property type="entry name" value="XGPRT"/>
    <property type="match status" value="1"/>
</dbReference>
<dbReference type="InterPro" id="IPR000836">
    <property type="entry name" value="PRibTrfase_dom"/>
</dbReference>
<dbReference type="InterPro" id="IPR029057">
    <property type="entry name" value="PRTase-like"/>
</dbReference>
<dbReference type="InterPro" id="IPR023747">
    <property type="entry name" value="Xanthine_Guanine_PRibTrfase"/>
</dbReference>
<dbReference type="NCBIfam" id="NF006613">
    <property type="entry name" value="PRK09177.1"/>
    <property type="match status" value="1"/>
</dbReference>
<dbReference type="PANTHER" id="PTHR39563">
    <property type="entry name" value="XANTHINE PHOSPHORIBOSYLTRANSFERASE"/>
    <property type="match status" value="1"/>
</dbReference>
<dbReference type="PANTHER" id="PTHR39563:SF1">
    <property type="entry name" value="XANTHINE-GUANINE PHOSPHORIBOSYLTRANSFERASE"/>
    <property type="match status" value="1"/>
</dbReference>
<dbReference type="Pfam" id="PF00156">
    <property type="entry name" value="Pribosyltran"/>
    <property type="match status" value="1"/>
</dbReference>
<dbReference type="SUPFAM" id="SSF53271">
    <property type="entry name" value="PRTase-like"/>
    <property type="match status" value="1"/>
</dbReference>
<dbReference type="PROSITE" id="PS00103">
    <property type="entry name" value="PUR_PYR_PR_TRANSFER"/>
    <property type="match status" value="1"/>
</dbReference>
<organism>
    <name type="scientific">Aeromonas salmonicida (strain A449)</name>
    <dbReference type="NCBI Taxonomy" id="382245"/>
    <lineage>
        <taxon>Bacteria</taxon>
        <taxon>Pseudomonadati</taxon>
        <taxon>Pseudomonadota</taxon>
        <taxon>Gammaproteobacteria</taxon>
        <taxon>Aeromonadales</taxon>
        <taxon>Aeromonadaceae</taxon>
        <taxon>Aeromonas</taxon>
    </lineage>
</organism>
<evidence type="ECO:0000255" key="1">
    <source>
        <dbReference type="HAMAP-Rule" id="MF_01903"/>
    </source>
</evidence>
<accession>A4SJF2</accession>